<name>PPIP1_MOUSE</name>
<gene>
    <name type="primary">Pstpip1</name>
</gene>
<protein>
    <recommendedName>
        <fullName>Proline-serine-threonine phosphatase-interacting protein 1</fullName>
        <shortName>PEST phosphatase-interacting protein 1</shortName>
    </recommendedName>
</protein>
<comment type="function">
    <text evidence="6 7 8 9 10">Involved in regulation of the actin cytoskeleton. May regulate WAS actin-bundling activity. Bridges the interaction between ABL1 and PTPN18 leading to ABL1 dephosphorylation. May play a role as a scaffold protein between PTPN12 and WAS and allow PTPN12 to dephosphorylate WAS. Has the potential to physically couple CD2 and CD2AP to WAS. Acts downstream of CD2 and CD2AP to recruit WAS to the T-cell:APC contact site so as to promote the actin polymerization required for synapse induction during T-cell activation. Down-regulates CD2-stimulated adhesion through the coupling of PTPN12 to CD2. Also has a role in innate immunity and the inflammatory response. Recruited to inflammasomes by MEFV. Induces formation of pyroptosomes, large supramolecular structures composed of oligomerized PYCARD dimers which form prior to inflammatory apoptosis. Binding to MEFV allows MEFV to bind to PYCARD and facilitates pyroptosome formation. Regulates endocytosis and cell migration in neutrophils.</text>
</comment>
<comment type="subunit">
    <text evidence="1 6 7 8 9 10">Homodimer. Homotrimer. Interacts (via coiled-coil domain) with CD2AP, PTPN12 and PTPN18. Interacts (via SH3 domain) with ABL1 and WAS. Interacts (via SH3 and coiled-coil domains) with MEFV (via B-box zinc finger); the interaction allows binding of MEFV to PYCARD and facilitates formation of PYCARD pyroptosomes. Interacts with DNM2 and FASLG (By similarity). Interacts with CD2.</text>
</comment>
<comment type="interaction">
    <interactant intactId="EBI-7484574">
        <id>P97814</id>
    </interactant>
    <interactant intactId="EBI-914519">
        <id>P00520</id>
        <label>Abl1</label>
    </interactant>
    <organismsDiffer>false</organismsDiffer>
    <experiments>5</experiments>
</comment>
<comment type="interaction">
    <interactant intactId="EBI-7484574">
        <id>P97814</id>
    </interactant>
    <interactant intactId="EBI-2642957">
        <id>P35831</id>
        <label>Ptpn12</label>
    </interactant>
    <organismsDiffer>false</organismsDiffer>
    <experiments>5</experiments>
</comment>
<comment type="interaction">
    <interactant intactId="EBI-7484574">
        <id>P97814</id>
    </interactant>
    <interactant intactId="EBI-7074223">
        <id>Q61152</id>
        <label>Ptpn18</label>
    </interactant>
    <organismsDiffer>false</organismsDiffer>
    <experiments>3</experiments>
</comment>
<comment type="subcellular location">
    <subcellularLocation>
        <location evidence="7 8">Cytoplasm</location>
    </subcellularLocation>
    <subcellularLocation>
        <location evidence="7">Cytoplasm</location>
        <location evidence="7">Perinuclear region</location>
    </subcellularLocation>
    <subcellularLocation>
        <location evidence="9">Cell projection</location>
        <location evidence="9">Lamellipodium</location>
    </subcellularLocation>
    <subcellularLocation>
        <location evidence="9">Cleavage furrow</location>
    </subcellularLocation>
    <subcellularLocation>
        <location evidence="9 10">Cytoplasm</location>
        <location evidence="9 10">Cytoskeleton</location>
    </subcellularLocation>
    <subcellularLocation>
        <location evidence="2">Cell membrane</location>
        <topology evidence="2">Peripheral membrane protein</topology>
    </subcellularLocation>
    <subcellularLocation>
        <location evidence="2">Cell projection</location>
        <location evidence="2">Uropodium</location>
    </subcellularLocation>
    <text evidence="2 7 8 9 10">Colocalized with PTPN12 in the cytoplasm and the perinuclear region (PubMed:11711533). During interphase, colocalizes with F-actin in the cortical cytoskeleton, lamellipodia, and stress fibers (PubMed:9265651). In dividing cells, colocalizes with the F-actin rich cytokinetic cleavage furrow (PubMed:9265651). Colocalized with CD2AP and WAS in the actin cytoskeleton within the cytoplasm (PubMed:12530983, PubMed:9488710). Colocalized with CD2, CD2AP and WAS at the site of T-cell:APC contact (PubMed:12530983). Mainly cytoplasmic in T cells. Colocalizes in cluster with CD2 near the cell surface membrane in activated T-cells. In monocytes, forms a branched filamentous network in the cytoplasm. In transfected cells, forms relatively straight filaments radiating out from the nucleus. Filament formation requires an intact tubulin cytoskeleton. In migrating neutrophils, colocalizes with PIP5K1C and DNM2 to the trailing edge of the uropod in a actin-dependent manner (By similarity).</text>
</comment>
<comment type="tissue specificity">
    <text evidence="7 9">Highly expressed in adult lung and spleen, and weakly expressed in testis, muscle, kidney, brain and heart. Highly expressed in spleen and thymus, moderately in lung, brain and muscle, and weakly expressed in heart and liver (at protein level).</text>
</comment>
<comment type="developmental stage">
    <text evidence="9">Highly expressed in 7 dpc embryos.</text>
</comment>
<comment type="domain">
    <text evidence="1">The F-BAR domain is important for filament formation. The SH3 domain is not required for filament formation or localization to the uropod (By similarity).</text>
</comment>
<comment type="PTM">
    <text evidence="6 7 9 10">Dephosphorylated on Tyr-344 by PTPN18, this event negatively regulates the association of PSTPIP1 with SH2 domain-containing proteins as tyrosine kinase. Phosphorylation of Tyr-344 is probably required for subsequent phosphorylation at other tyrosine residues. Phosphorylation is induced by activation of the EGFR and PDGFR in a ABL1 dependent manner. The phosphorylation regulates the interaction with WAS and with MEFV.</text>
</comment>
<reference key="1">
    <citation type="journal article" date="1997" name="J. Cell Biol.">
        <title>PSTPIP: a tyrosine phosphorylated cleavage furrow-associated protein that is a substrate for a PEST tyrosine phosphatase.</title>
        <authorList>
            <person name="Spencer S."/>
            <person name="Dowbenko D."/>
            <person name="Cheng J."/>
            <person name="Li W."/>
            <person name="Brush J."/>
            <person name="Utzig S."/>
            <person name="Simanis V."/>
            <person name="Lasky L.A."/>
        </authorList>
    </citation>
    <scope>NUCLEOTIDE SEQUENCE [MRNA]</scope>
    <scope>FUNCTION</scope>
    <scope>INTERACTION WITH PTPN18</scope>
    <scope>SUBCELLULAR LOCATION</scope>
    <scope>TISSUE SPECIFICITY</scope>
    <scope>DEVELOPMENTAL STAGE</scope>
    <scope>PHOSPHORYLATION</scope>
</reference>
<reference key="2">
    <citation type="journal article" date="2004" name="Genome Res.">
        <title>The status, quality, and expansion of the NIH full-length cDNA project: the Mammalian Gene Collection (MGC).</title>
        <authorList>
            <consortium name="The MGC Project Team"/>
        </authorList>
    </citation>
    <scope>NUCLEOTIDE SEQUENCE [LARGE SCALE MRNA]</scope>
    <source>
        <strain>C57BL/6NCr</strain>
        <tissue>Hematopoietic stem cell</tissue>
    </source>
</reference>
<reference key="3">
    <citation type="journal article" date="1998" name="J. Biol. Chem.">
        <title>Tyrosine phosphorylation regulates the SH3-mediated binding of the Wiskott-Aldrich syndrome protein to PSTPIP, a cytoskeletal-associated protein.</title>
        <authorList>
            <person name="Wu Y."/>
            <person name="Spencer S.D."/>
            <person name="Lasky L.A."/>
        </authorList>
    </citation>
    <scope>FUNCTION</scope>
    <scope>INTERACTION WITH WAS</scope>
    <scope>SUBCELLULAR LOCATION</scope>
    <scope>PHOSPHORYLATION AT TYR-344</scope>
    <scope>MUTAGENESIS OF TYR-344 AND TYR-367</scope>
</reference>
<reference key="4">
    <citation type="journal article" date="2000" name="Mol. Cell">
        <title>Cytoskeletal protein PSTPIP1 directs the PEST-type protein tyrosine phosphatase to the c-Abl kinase to mediate Abl dephosphorylation.</title>
        <authorList>
            <person name="Cong F."/>
            <person name="Spencer S."/>
            <person name="Cote J.F."/>
            <person name="Wu Y."/>
            <person name="Tremblay M.L."/>
            <person name="Lasky L.A."/>
            <person name="Goff S.P."/>
        </authorList>
    </citation>
    <scope>FUNCTION</scope>
    <scope>INTERACTION WITH ABL1</scope>
    <scope>PHOSPHORYLATION</scope>
    <scope>MUTAGENESIS OF TYR-344 AND TYR-367</scope>
</reference>
<reference key="5">
    <citation type="journal article" date="2002" name="J. Biol. Chem.">
        <title>PSTPIP is a substrate of PTP-PEST and serves as a scaffold guiding PTP-PEST toward a specific dephosphorylation of WASP.</title>
        <authorList>
            <person name="Cote J.-F."/>
            <person name="Chung P.L."/>
            <person name="Theberge J.-F."/>
            <person name="Halle M."/>
            <person name="Spencer S."/>
            <person name="Lasky L.A."/>
            <person name="Tremblay M.L."/>
        </authorList>
    </citation>
    <scope>FUNCTION</scope>
    <scope>INTERACTION WITH PTPN12</scope>
    <scope>SUBCELLULAR LOCATION</scope>
    <scope>TISSUE SPECIFICITY</scope>
    <scope>PHOSPHORYLATION</scope>
    <scope>MUTAGENESIS OF TYR-344 AND TYR-367</scope>
</reference>
<reference key="6">
    <citation type="journal article" date="2003" name="Immunity">
        <title>The Wiskott-Aldrich syndrome protein acts downstream of CD2 and the CD2AP and PSTPIP1 adaptors to promote formation of the immunological synapse.</title>
        <authorList>
            <person name="Badour K."/>
            <person name="Zhang J."/>
            <person name="Shi F."/>
            <person name="McGavin M.K.H."/>
            <person name="Rampersad V."/>
            <person name="Hardy L.A."/>
            <person name="Field D."/>
            <person name="Siminovitch K.A."/>
        </authorList>
    </citation>
    <scope>FUNCTION</scope>
    <scope>INTERACTION WITH CD2; CD2AP AND WAS</scope>
    <scope>SUBCELLULAR LOCATION</scope>
</reference>
<reference key="7">
    <citation type="journal article" date="2010" name="Cell">
        <title>A tissue-specific atlas of mouse protein phosphorylation and expression.</title>
        <authorList>
            <person name="Huttlin E.L."/>
            <person name="Jedrychowski M.P."/>
            <person name="Elias J.E."/>
            <person name="Goswami T."/>
            <person name="Rad R."/>
            <person name="Beausoleil S.A."/>
            <person name="Villen J."/>
            <person name="Haas W."/>
            <person name="Sowa M.E."/>
            <person name="Gygi S.P."/>
        </authorList>
    </citation>
    <scope>PHOSPHORYLATION [LARGE SCALE ANALYSIS] AT SER-318</scope>
    <scope>IDENTIFICATION BY MASS SPECTROMETRY [LARGE SCALE ANALYSIS]</scope>
    <source>
        <tissue>Spleen</tissue>
    </source>
</reference>
<proteinExistence type="evidence at protein level"/>
<sequence>MMAQLQFRDAFWCRDFTAHTGYEVLLQRLLDGRKMCKDVEELLRQRAQAEERYGKELVQIARKAGGQTEMNSLRTSFDSLKQQTENVGSAHIQLALALREELRSLEEFRERQKEQRKKYEAIMDRVQKSKLSLYKKTMESKKAYDQKCRDADDAEQAFERVSANGHQKQVEKSQNKAKQCKESATEAERVYRQNIEQLERARTEWEQEHRTTCEAFQLQEFDRLTILRNALWVHCNQLSMQCVKDDELYEEVRLTLEGCDVEGDINGFIQSKSTGREPPAPVPYQNYYDREVTPLIGSPSIQPSCGVIKRFSGLLHGSPKTTPSAPAASTETLTPTPERNELVYASIEVQATQGNLNSSAQDYRALYDYTAQNSDELDISAGDILAVILEGEDGWWTVERNGQRGFVPGSYLEKL</sequence>
<keyword id="KW-0130">Cell adhesion</keyword>
<keyword id="KW-1003">Cell membrane</keyword>
<keyword id="KW-0966">Cell projection</keyword>
<keyword id="KW-0175">Coiled coil</keyword>
<keyword id="KW-0963">Cytoplasm</keyword>
<keyword id="KW-0206">Cytoskeleton</keyword>
<keyword id="KW-0254">Endocytosis</keyword>
<keyword id="KW-0391">Immunity</keyword>
<keyword id="KW-0395">Inflammatory response</keyword>
<keyword id="KW-0399">Innate immunity</keyword>
<keyword id="KW-0472">Membrane</keyword>
<keyword id="KW-0597">Phosphoprotein</keyword>
<keyword id="KW-1185">Reference proteome</keyword>
<keyword id="KW-0728">SH3 domain</keyword>
<organism>
    <name type="scientific">Mus musculus</name>
    <name type="common">Mouse</name>
    <dbReference type="NCBI Taxonomy" id="10090"/>
    <lineage>
        <taxon>Eukaryota</taxon>
        <taxon>Metazoa</taxon>
        <taxon>Chordata</taxon>
        <taxon>Craniata</taxon>
        <taxon>Vertebrata</taxon>
        <taxon>Euteleostomi</taxon>
        <taxon>Mammalia</taxon>
        <taxon>Eutheria</taxon>
        <taxon>Euarchontoglires</taxon>
        <taxon>Glires</taxon>
        <taxon>Rodentia</taxon>
        <taxon>Myomorpha</taxon>
        <taxon>Muroidea</taxon>
        <taxon>Muridae</taxon>
        <taxon>Murinae</taxon>
        <taxon>Mus</taxon>
        <taxon>Mus</taxon>
    </lineage>
</organism>
<evidence type="ECO:0000250" key="1"/>
<evidence type="ECO:0000250" key="2">
    <source>
        <dbReference type="UniProtKB" id="O43586"/>
    </source>
</evidence>
<evidence type="ECO:0000255" key="3"/>
<evidence type="ECO:0000255" key="4">
    <source>
        <dbReference type="PROSITE-ProRule" id="PRU00192"/>
    </source>
</evidence>
<evidence type="ECO:0000255" key="5">
    <source>
        <dbReference type="PROSITE-ProRule" id="PRU01077"/>
    </source>
</evidence>
<evidence type="ECO:0000269" key="6">
    <source>
    </source>
</evidence>
<evidence type="ECO:0000269" key="7">
    <source>
    </source>
</evidence>
<evidence type="ECO:0000269" key="8">
    <source>
    </source>
</evidence>
<evidence type="ECO:0000269" key="9">
    <source>
    </source>
</evidence>
<evidence type="ECO:0000269" key="10">
    <source>
    </source>
</evidence>
<evidence type="ECO:0000305" key="11"/>
<evidence type="ECO:0000305" key="12">
    <source>
    </source>
</evidence>
<evidence type="ECO:0007744" key="13">
    <source>
    </source>
</evidence>
<dbReference type="EMBL" id="U87814">
    <property type="protein sequence ID" value="AAB48483.1"/>
    <property type="molecule type" value="mRNA"/>
</dbReference>
<dbReference type="EMBL" id="BC096761">
    <property type="protein sequence ID" value="AAH96761.1"/>
    <property type="molecule type" value="mRNA"/>
</dbReference>
<dbReference type="CCDS" id="CCDS40645.1"/>
<dbReference type="RefSeq" id="NP_035323.2">
    <property type="nucleotide sequence ID" value="NM_011193.3"/>
</dbReference>
<dbReference type="SMR" id="P97814"/>
<dbReference type="BioGRID" id="202439">
    <property type="interactions" value="4"/>
</dbReference>
<dbReference type="FunCoup" id="P97814">
    <property type="interactions" value="70"/>
</dbReference>
<dbReference type="IntAct" id="P97814">
    <property type="interactions" value="5"/>
</dbReference>
<dbReference type="MINT" id="P97814"/>
<dbReference type="STRING" id="10090.ENSMUSP00000055823"/>
<dbReference type="GlyGen" id="P97814">
    <property type="glycosylation" value="1 site"/>
</dbReference>
<dbReference type="iPTMnet" id="P97814"/>
<dbReference type="PhosphoSitePlus" id="P97814"/>
<dbReference type="jPOST" id="P97814"/>
<dbReference type="PaxDb" id="10090-ENSMUSP00000055823"/>
<dbReference type="PeptideAtlas" id="P97814"/>
<dbReference type="ProteomicsDB" id="289736"/>
<dbReference type="DNASU" id="19200"/>
<dbReference type="GeneID" id="19200"/>
<dbReference type="KEGG" id="mmu:19200"/>
<dbReference type="UCSC" id="uc009psv.2">
    <property type="organism name" value="mouse"/>
</dbReference>
<dbReference type="AGR" id="MGI:1321396"/>
<dbReference type="CTD" id="9051"/>
<dbReference type="MGI" id="MGI:1321396">
    <property type="gene designation" value="Pstpip1"/>
</dbReference>
<dbReference type="eggNOG" id="KOG2398">
    <property type="taxonomic scope" value="Eukaryota"/>
</dbReference>
<dbReference type="InParanoid" id="P97814"/>
<dbReference type="OrthoDB" id="10255964at2759"/>
<dbReference type="PhylomeDB" id="P97814"/>
<dbReference type="TreeFam" id="TF313677"/>
<dbReference type="Reactome" id="R-MMU-844456">
    <property type="pathway name" value="The NLRP3 inflammasome"/>
</dbReference>
<dbReference type="BioGRID-ORCS" id="19200">
    <property type="hits" value="2 hits in 77 CRISPR screens"/>
</dbReference>
<dbReference type="PRO" id="PR:P97814"/>
<dbReference type="Proteomes" id="UP000000589">
    <property type="component" value="Unplaced"/>
</dbReference>
<dbReference type="RNAct" id="P97814">
    <property type="molecule type" value="protein"/>
</dbReference>
<dbReference type="GO" id="GO:0005826">
    <property type="term" value="C:actomyosin contractile ring"/>
    <property type="evidence" value="ECO:0000314"/>
    <property type="project" value="MGI"/>
</dbReference>
<dbReference type="GO" id="GO:0032154">
    <property type="term" value="C:cleavage furrow"/>
    <property type="evidence" value="ECO:0000314"/>
    <property type="project" value="MGI"/>
</dbReference>
<dbReference type="GO" id="GO:0030027">
    <property type="term" value="C:lamellipodium"/>
    <property type="evidence" value="ECO:0007669"/>
    <property type="project" value="UniProtKB-SubCell"/>
</dbReference>
<dbReference type="GO" id="GO:0048471">
    <property type="term" value="C:perinuclear region of cytoplasm"/>
    <property type="evidence" value="ECO:0007669"/>
    <property type="project" value="UniProtKB-SubCell"/>
</dbReference>
<dbReference type="GO" id="GO:0001725">
    <property type="term" value="C:stress fiber"/>
    <property type="evidence" value="ECO:0000314"/>
    <property type="project" value="MGI"/>
</dbReference>
<dbReference type="GO" id="GO:0001931">
    <property type="term" value="C:uropod"/>
    <property type="evidence" value="ECO:0007669"/>
    <property type="project" value="UniProtKB-SubCell"/>
</dbReference>
<dbReference type="GO" id="GO:0003779">
    <property type="term" value="F:actin binding"/>
    <property type="evidence" value="ECO:0000314"/>
    <property type="project" value="MGI"/>
</dbReference>
<dbReference type="GO" id="GO:0019903">
    <property type="term" value="F:protein phosphatase binding"/>
    <property type="evidence" value="ECO:0000314"/>
    <property type="project" value="MGI"/>
</dbReference>
<dbReference type="GO" id="GO:0007155">
    <property type="term" value="P:cell adhesion"/>
    <property type="evidence" value="ECO:0007669"/>
    <property type="project" value="UniProtKB-KW"/>
</dbReference>
<dbReference type="GO" id="GO:0006897">
    <property type="term" value="P:endocytosis"/>
    <property type="evidence" value="ECO:0007669"/>
    <property type="project" value="UniProtKB-KW"/>
</dbReference>
<dbReference type="GO" id="GO:0006954">
    <property type="term" value="P:inflammatory response"/>
    <property type="evidence" value="ECO:0007669"/>
    <property type="project" value="UniProtKB-KW"/>
</dbReference>
<dbReference type="GO" id="GO:0045087">
    <property type="term" value="P:innate immune response"/>
    <property type="evidence" value="ECO:0007669"/>
    <property type="project" value="UniProtKB-KW"/>
</dbReference>
<dbReference type="CDD" id="cd11824">
    <property type="entry name" value="SH3_PSTPIP1"/>
    <property type="match status" value="1"/>
</dbReference>
<dbReference type="FunFam" id="1.20.1270.60:FF:000037">
    <property type="entry name" value="Proline-serine-threonine phosphatase interacting protein 1"/>
    <property type="match status" value="1"/>
</dbReference>
<dbReference type="FunFam" id="2.30.30.40:FF:000150">
    <property type="entry name" value="Proline-serine-threonine phosphatase interacting protein 1"/>
    <property type="match status" value="1"/>
</dbReference>
<dbReference type="Gene3D" id="1.20.1270.60">
    <property type="entry name" value="Arfaptin homology (AH) domain/BAR domain"/>
    <property type="match status" value="1"/>
</dbReference>
<dbReference type="Gene3D" id="2.30.30.40">
    <property type="entry name" value="SH3 Domains"/>
    <property type="match status" value="1"/>
</dbReference>
<dbReference type="InterPro" id="IPR027267">
    <property type="entry name" value="AH/BAR_dom_sf"/>
</dbReference>
<dbReference type="InterPro" id="IPR031160">
    <property type="entry name" value="F_BAR"/>
</dbReference>
<dbReference type="InterPro" id="IPR001060">
    <property type="entry name" value="FCH_dom"/>
</dbReference>
<dbReference type="InterPro" id="IPR030777">
    <property type="entry name" value="PSTPIP1_SH3"/>
</dbReference>
<dbReference type="InterPro" id="IPR036028">
    <property type="entry name" value="SH3-like_dom_sf"/>
</dbReference>
<dbReference type="InterPro" id="IPR001452">
    <property type="entry name" value="SH3_domain"/>
</dbReference>
<dbReference type="PANTHER" id="PTHR23065">
    <property type="entry name" value="PROLINE-SERINE-THREONINE PHOSPHATASE INTERACTING PROTEIN 1"/>
    <property type="match status" value="1"/>
</dbReference>
<dbReference type="PANTHER" id="PTHR23065:SF51">
    <property type="entry name" value="PROLINE-SERINE-THREONINE PHOSPHATASE-INTERACTING PROTEIN 1"/>
    <property type="match status" value="1"/>
</dbReference>
<dbReference type="Pfam" id="PF00611">
    <property type="entry name" value="FCH"/>
    <property type="match status" value="1"/>
</dbReference>
<dbReference type="Pfam" id="PF00018">
    <property type="entry name" value="SH3_1"/>
    <property type="match status" value="1"/>
</dbReference>
<dbReference type="PRINTS" id="PR00452">
    <property type="entry name" value="SH3DOMAIN"/>
</dbReference>
<dbReference type="PRINTS" id="PR01887">
    <property type="entry name" value="SPECTRNALPHA"/>
</dbReference>
<dbReference type="SMART" id="SM00055">
    <property type="entry name" value="FCH"/>
    <property type="match status" value="1"/>
</dbReference>
<dbReference type="SMART" id="SM00326">
    <property type="entry name" value="SH3"/>
    <property type="match status" value="1"/>
</dbReference>
<dbReference type="SUPFAM" id="SSF103657">
    <property type="entry name" value="BAR/IMD domain-like"/>
    <property type="match status" value="1"/>
</dbReference>
<dbReference type="SUPFAM" id="SSF50044">
    <property type="entry name" value="SH3-domain"/>
    <property type="match status" value="1"/>
</dbReference>
<dbReference type="PROSITE" id="PS51741">
    <property type="entry name" value="F_BAR"/>
    <property type="match status" value="1"/>
</dbReference>
<dbReference type="PROSITE" id="PS50002">
    <property type="entry name" value="SH3"/>
    <property type="match status" value="1"/>
</dbReference>
<accession>P97814</accession>
<accession>Q4V9R4</accession>
<feature type="chain" id="PRO_0000058540" description="Proline-serine-threonine phosphatase-interacting protein 1">
    <location>
        <begin position="1"/>
        <end position="415"/>
    </location>
</feature>
<feature type="domain" description="F-BAR" evidence="5">
    <location>
        <begin position="5"/>
        <end position="264"/>
    </location>
</feature>
<feature type="domain" description="SH3" evidence="4">
    <location>
        <begin position="358"/>
        <end position="415"/>
    </location>
</feature>
<feature type="coiled-coil region" evidence="3">
    <location>
        <begin position="94"/>
        <end position="133"/>
    </location>
</feature>
<feature type="coiled-coil region" evidence="3">
    <location>
        <begin position="162"/>
        <end position="215"/>
    </location>
</feature>
<feature type="modified residue" description="Phosphoserine" evidence="13">
    <location>
        <position position="318"/>
    </location>
</feature>
<feature type="modified residue" description="Phosphotyrosine; by ABL1" evidence="12">
    <location>
        <position position="344"/>
    </location>
</feature>
<feature type="mutagenesis site" description="Complete loss of protein phosphorylation." evidence="6 7 10">
    <original>Y</original>
    <variation>F</variation>
    <location>
        <position position="344"/>
    </location>
</feature>
<feature type="mutagenesis site" description="No effect on phosphorylation." evidence="6 7 10">
    <original>Y</original>
    <variation>F</variation>
    <location>
        <position position="367"/>
    </location>
</feature>
<feature type="sequence conflict" description="In Ref. 2; AAH96761." evidence="11" ref="2">
    <original>I</original>
    <variation>V</variation>
    <location>
        <position position="301"/>
    </location>
</feature>